<name>UPPP_CAUVC</name>
<accession>Q9A2G0</accession>
<proteinExistence type="inferred from homology"/>
<reference key="1">
    <citation type="journal article" date="2001" name="Proc. Natl. Acad. Sci. U.S.A.">
        <title>Complete genome sequence of Caulobacter crescentus.</title>
        <authorList>
            <person name="Nierman W.C."/>
            <person name="Feldblyum T.V."/>
            <person name="Laub M.T."/>
            <person name="Paulsen I.T."/>
            <person name="Nelson K.E."/>
            <person name="Eisen J.A."/>
            <person name="Heidelberg J.F."/>
            <person name="Alley M.R.K."/>
            <person name="Ohta N."/>
            <person name="Maddock J.R."/>
            <person name="Potocka I."/>
            <person name="Nelson W.C."/>
            <person name="Newton A."/>
            <person name="Stephens C."/>
            <person name="Phadke N.D."/>
            <person name="Ely B."/>
            <person name="DeBoy R.T."/>
            <person name="Dodson R.J."/>
            <person name="Durkin A.S."/>
            <person name="Gwinn M.L."/>
            <person name="Haft D.H."/>
            <person name="Kolonay J.F."/>
            <person name="Smit J."/>
            <person name="Craven M.B."/>
            <person name="Khouri H.M."/>
            <person name="Shetty J."/>
            <person name="Berry K.J."/>
            <person name="Utterback T.R."/>
            <person name="Tran K."/>
            <person name="Wolf A.M."/>
            <person name="Vamathevan J.J."/>
            <person name="Ermolaeva M.D."/>
            <person name="White O."/>
            <person name="Salzberg S.L."/>
            <person name="Venter J.C."/>
            <person name="Shapiro L."/>
            <person name="Fraser C.M."/>
        </authorList>
    </citation>
    <scope>NUCLEOTIDE SEQUENCE [LARGE SCALE GENOMIC DNA]</scope>
    <source>
        <strain>ATCC 19089 / CIP 103742 / CB 15</strain>
    </source>
</reference>
<evidence type="ECO:0000255" key="1">
    <source>
        <dbReference type="HAMAP-Rule" id="MF_01006"/>
    </source>
</evidence>
<protein>
    <recommendedName>
        <fullName evidence="1">Undecaprenyl-diphosphatase</fullName>
        <ecNumber evidence="1">3.6.1.27</ecNumber>
    </recommendedName>
    <alternativeName>
        <fullName evidence="1">Bacitracin resistance protein</fullName>
    </alternativeName>
    <alternativeName>
        <fullName evidence="1">Undecaprenyl pyrophosphate phosphatase</fullName>
    </alternativeName>
</protein>
<keyword id="KW-0046">Antibiotic resistance</keyword>
<keyword id="KW-0997">Cell inner membrane</keyword>
<keyword id="KW-1003">Cell membrane</keyword>
<keyword id="KW-0133">Cell shape</keyword>
<keyword id="KW-0961">Cell wall biogenesis/degradation</keyword>
<keyword id="KW-0378">Hydrolase</keyword>
<keyword id="KW-0472">Membrane</keyword>
<keyword id="KW-0573">Peptidoglycan synthesis</keyword>
<keyword id="KW-1185">Reference proteome</keyword>
<keyword id="KW-0812">Transmembrane</keyword>
<keyword id="KW-1133">Transmembrane helix</keyword>
<dbReference type="EC" id="3.6.1.27" evidence="1"/>
<dbReference type="EMBL" id="AE005673">
    <property type="protein sequence ID" value="AAK25567.1"/>
    <property type="molecule type" value="Genomic_DNA"/>
</dbReference>
<dbReference type="PIR" id="C87696">
    <property type="entry name" value="C87696"/>
</dbReference>
<dbReference type="RefSeq" id="NP_422399.1">
    <property type="nucleotide sequence ID" value="NC_002696.2"/>
</dbReference>
<dbReference type="RefSeq" id="WP_010921432.1">
    <property type="nucleotide sequence ID" value="NC_002696.2"/>
</dbReference>
<dbReference type="SMR" id="Q9A2G0"/>
<dbReference type="STRING" id="190650.CC_3605"/>
<dbReference type="EnsemblBacteria" id="AAK25567">
    <property type="protein sequence ID" value="AAK25567"/>
    <property type="gene ID" value="CC_3605"/>
</dbReference>
<dbReference type="KEGG" id="ccr:CC_3605"/>
<dbReference type="PATRIC" id="fig|190650.5.peg.3608"/>
<dbReference type="eggNOG" id="COG1968">
    <property type="taxonomic scope" value="Bacteria"/>
</dbReference>
<dbReference type="HOGENOM" id="CLU_060296_2_0_5"/>
<dbReference type="BioCyc" id="CAULO:CC3605-MONOMER"/>
<dbReference type="Proteomes" id="UP000001816">
    <property type="component" value="Chromosome"/>
</dbReference>
<dbReference type="GO" id="GO:0005886">
    <property type="term" value="C:plasma membrane"/>
    <property type="evidence" value="ECO:0007669"/>
    <property type="project" value="UniProtKB-SubCell"/>
</dbReference>
<dbReference type="GO" id="GO:0050380">
    <property type="term" value="F:undecaprenyl-diphosphatase activity"/>
    <property type="evidence" value="ECO:0007669"/>
    <property type="project" value="UniProtKB-UniRule"/>
</dbReference>
<dbReference type="GO" id="GO:0071555">
    <property type="term" value="P:cell wall organization"/>
    <property type="evidence" value="ECO:0007669"/>
    <property type="project" value="UniProtKB-KW"/>
</dbReference>
<dbReference type="GO" id="GO:0009252">
    <property type="term" value="P:peptidoglycan biosynthetic process"/>
    <property type="evidence" value="ECO:0007669"/>
    <property type="project" value="UniProtKB-KW"/>
</dbReference>
<dbReference type="GO" id="GO:0008360">
    <property type="term" value="P:regulation of cell shape"/>
    <property type="evidence" value="ECO:0007669"/>
    <property type="project" value="UniProtKB-KW"/>
</dbReference>
<dbReference type="GO" id="GO:0046677">
    <property type="term" value="P:response to antibiotic"/>
    <property type="evidence" value="ECO:0007669"/>
    <property type="project" value="UniProtKB-UniRule"/>
</dbReference>
<dbReference type="HAMAP" id="MF_01006">
    <property type="entry name" value="Undec_diphosphatase"/>
    <property type="match status" value="1"/>
</dbReference>
<dbReference type="InterPro" id="IPR003824">
    <property type="entry name" value="UppP"/>
</dbReference>
<dbReference type="NCBIfam" id="NF001389">
    <property type="entry name" value="PRK00281.1-2"/>
    <property type="match status" value="1"/>
</dbReference>
<dbReference type="NCBIfam" id="NF001390">
    <property type="entry name" value="PRK00281.1-4"/>
    <property type="match status" value="1"/>
</dbReference>
<dbReference type="NCBIfam" id="TIGR00753">
    <property type="entry name" value="undec_PP_bacA"/>
    <property type="match status" value="1"/>
</dbReference>
<dbReference type="PANTHER" id="PTHR30622">
    <property type="entry name" value="UNDECAPRENYL-DIPHOSPHATASE"/>
    <property type="match status" value="1"/>
</dbReference>
<dbReference type="PANTHER" id="PTHR30622:SF3">
    <property type="entry name" value="UNDECAPRENYL-DIPHOSPHATASE"/>
    <property type="match status" value="1"/>
</dbReference>
<dbReference type="Pfam" id="PF02673">
    <property type="entry name" value="BacA"/>
    <property type="match status" value="1"/>
</dbReference>
<sequence>MPDWLIALILGLIEGLTEFIPVSSTGHLLLLGHFLGFHSPGNTFQVLIQLGAILAITGVYFGRLWGLLTTLPTEPGSRRFVIGILLAFLPAVFVGVAAHDFIKTVLYETPALVCSTLIIGGFILLALDRMKLEPRYTDVAEYPLKTAFIIGLFQCLALVPGVSRSGATIAGALLLKCDKRSAAEFSFFLAMPTMAGAFAYDLYKNIDKLSTNDLGLIGIGFLAALVSGVFVVKTVLDFITRHGFAPFAYWRIAVGVVGLALLYIPR</sequence>
<comment type="function">
    <text evidence="1">Catalyzes the dephosphorylation of undecaprenyl diphosphate (UPP). Confers resistance to bacitracin.</text>
</comment>
<comment type="catalytic activity">
    <reaction evidence="1">
        <text>di-trans,octa-cis-undecaprenyl diphosphate + H2O = di-trans,octa-cis-undecaprenyl phosphate + phosphate + H(+)</text>
        <dbReference type="Rhea" id="RHEA:28094"/>
        <dbReference type="ChEBI" id="CHEBI:15377"/>
        <dbReference type="ChEBI" id="CHEBI:15378"/>
        <dbReference type="ChEBI" id="CHEBI:43474"/>
        <dbReference type="ChEBI" id="CHEBI:58405"/>
        <dbReference type="ChEBI" id="CHEBI:60392"/>
        <dbReference type="EC" id="3.6.1.27"/>
    </reaction>
</comment>
<comment type="subcellular location">
    <subcellularLocation>
        <location evidence="1">Cell inner membrane</location>
        <topology evidence="1">Multi-pass membrane protein</topology>
    </subcellularLocation>
</comment>
<comment type="miscellaneous">
    <text>Bacitracin is thought to be involved in the inhibition of peptidoglycan synthesis by sequestering undecaprenyl diphosphate, thereby reducing the pool of lipid carrier available.</text>
</comment>
<comment type="similarity">
    <text evidence="1">Belongs to the UppP family.</text>
</comment>
<gene>
    <name evidence="1" type="primary">uppP</name>
    <name type="synonym">bacA</name>
    <name type="synonym">upk</name>
    <name type="ordered locus">CC_3605</name>
</gene>
<feature type="chain" id="PRO_0000151130" description="Undecaprenyl-diphosphatase">
    <location>
        <begin position="1"/>
        <end position="266"/>
    </location>
</feature>
<feature type="transmembrane region" description="Helical" evidence="1">
    <location>
        <begin position="4"/>
        <end position="24"/>
    </location>
</feature>
<feature type="transmembrane region" description="Helical" evidence="1">
    <location>
        <begin position="46"/>
        <end position="66"/>
    </location>
</feature>
<feature type="transmembrane region" description="Helical" evidence="1">
    <location>
        <begin position="82"/>
        <end position="102"/>
    </location>
</feature>
<feature type="transmembrane region" description="Helical" evidence="1">
    <location>
        <begin position="105"/>
        <end position="125"/>
    </location>
</feature>
<feature type="transmembrane region" description="Helical" evidence="1">
    <location>
        <begin position="142"/>
        <end position="162"/>
    </location>
</feature>
<feature type="transmembrane region" description="Helical" evidence="1">
    <location>
        <begin position="182"/>
        <end position="202"/>
    </location>
</feature>
<feature type="transmembrane region" description="Helical" evidence="1">
    <location>
        <begin position="216"/>
        <end position="236"/>
    </location>
</feature>
<feature type="transmembrane region" description="Helical" evidence="1">
    <location>
        <begin position="244"/>
        <end position="264"/>
    </location>
</feature>
<organism>
    <name type="scientific">Caulobacter vibrioides (strain ATCC 19089 / CIP 103742 / CB 15)</name>
    <name type="common">Caulobacter crescentus</name>
    <dbReference type="NCBI Taxonomy" id="190650"/>
    <lineage>
        <taxon>Bacteria</taxon>
        <taxon>Pseudomonadati</taxon>
        <taxon>Pseudomonadota</taxon>
        <taxon>Alphaproteobacteria</taxon>
        <taxon>Caulobacterales</taxon>
        <taxon>Caulobacteraceae</taxon>
        <taxon>Caulobacter</taxon>
    </lineage>
</organism>